<protein>
    <recommendedName>
        <fullName evidence="1">Large ribosomal subunit protein uL24</fullName>
    </recommendedName>
    <alternativeName>
        <fullName evidence="2">50S ribosomal protein L24</fullName>
    </alternativeName>
</protein>
<accession>C1CXF5</accession>
<feature type="chain" id="PRO_1000214537" description="Large ribosomal subunit protein uL24">
    <location>
        <begin position="1"/>
        <end position="115"/>
    </location>
</feature>
<reference key="1">
    <citation type="journal article" date="2009" name="PLoS Genet.">
        <title>Alliance of proteomics and genomics to unravel the specificities of Sahara bacterium Deinococcus deserti.</title>
        <authorList>
            <person name="de Groot A."/>
            <person name="Dulermo R."/>
            <person name="Ortet P."/>
            <person name="Blanchard L."/>
            <person name="Guerin P."/>
            <person name="Fernandez B."/>
            <person name="Vacherie B."/>
            <person name="Dossat C."/>
            <person name="Jolivet E."/>
            <person name="Siguier P."/>
            <person name="Chandler M."/>
            <person name="Barakat M."/>
            <person name="Dedieu A."/>
            <person name="Barbe V."/>
            <person name="Heulin T."/>
            <person name="Sommer S."/>
            <person name="Achouak W."/>
            <person name="Armengaud J."/>
        </authorList>
    </citation>
    <scope>NUCLEOTIDE SEQUENCE [LARGE SCALE GENOMIC DNA]</scope>
    <source>
        <strain>DSM 17065 / CIP 109153 / LMG 22923 / VCD115</strain>
    </source>
</reference>
<comment type="function">
    <text evidence="1">One of two assembly initiator proteins, it binds directly to the 5'-end of the 23S rRNA, where it nucleates assembly of the 50S subunit.</text>
</comment>
<comment type="function">
    <text evidence="1">One of the proteins that surrounds the polypeptide exit tunnel on the outside of the subunit.</text>
</comment>
<comment type="subunit">
    <text evidence="1">Part of the 50S ribosomal subunit.</text>
</comment>
<comment type="similarity">
    <text evidence="1">Belongs to the universal ribosomal protein uL24 family.</text>
</comment>
<keyword id="KW-1185">Reference proteome</keyword>
<keyword id="KW-0687">Ribonucleoprotein</keyword>
<keyword id="KW-0689">Ribosomal protein</keyword>
<keyword id="KW-0694">RNA-binding</keyword>
<keyword id="KW-0699">rRNA-binding</keyword>
<proteinExistence type="inferred from homology"/>
<organism>
    <name type="scientific">Deinococcus deserti (strain DSM 17065 / CIP 109153 / LMG 22923 / VCD115)</name>
    <dbReference type="NCBI Taxonomy" id="546414"/>
    <lineage>
        <taxon>Bacteria</taxon>
        <taxon>Thermotogati</taxon>
        <taxon>Deinococcota</taxon>
        <taxon>Deinococci</taxon>
        <taxon>Deinococcales</taxon>
        <taxon>Deinococcaceae</taxon>
        <taxon>Deinococcus</taxon>
    </lineage>
</organism>
<sequence>MPRPSAGSHHSDKLHVKKGDTVVVLSGKHKGKTGKVLLALPRDQKVIVEGVNLVTKHVKPSASNPQGGIEQREGALHASKVSIVDPETGKATRIRKQIVDGKKVRVAVASGKVID</sequence>
<evidence type="ECO:0000255" key="1">
    <source>
        <dbReference type="HAMAP-Rule" id="MF_01326"/>
    </source>
</evidence>
<evidence type="ECO:0000305" key="2"/>
<gene>
    <name evidence="1" type="primary">rplX</name>
    <name type="ordered locus">Deide_18840</name>
</gene>
<name>RL24_DEIDV</name>
<dbReference type="EMBL" id="CP001114">
    <property type="protein sequence ID" value="ACO46872.1"/>
    <property type="molecule type" value="Genomic_DNA"/>
</dbReference>
<dbReference type="SMR" id="C1CXF5"/>
<dbReference type="STRING" id="546414.Deide_18840"/>
<dbReference type="PaxDb" id="546414-Deide_18840"/>
<dbReference type="KEGG" id="ddr:Deide_18840"/>
<dbReference type="eggNOG" id="COG0198">
    <property type="taxonomic scope" value="Bacteria"/>
</dbReference>
<dbReference type="HOGENOM" id="CLU_093315_2_0_0"/>
<dbReference type="OrthoDB" id="9807419at2"/>
<dbReference type="Proteomes" id="UP000002208">
    <property type="component" value="Chromosome"/>
</dbReference>
<dbReference type="GO" id="GO:1990904">
    <property type="term" value="C:ribonucleoprotein complex"/>
    <property type="evidence" value="ECO:0007669"/>
    <property type="project" value="UniProtKB-KW"/>
</dbReference>
<dbReference type="GO" id="GO:0005840">
    <property type="term" value="C:ribosome"/>
    <property type="evidence" value="ECO:0007669"/>
    <property type="project" value="UniProtKB-KW"/>
</dbReference>
<dbReference type="GO" id="GO:0019843">
    <property type="term" value="F:rRNA binding"/>
    <property type="evidence" value="ECO:0007669"/>
    <property type="project" value="UniProtKB-UniRule"/>
</dbReference>
<dbReference type="GO" id="GO:0003735">
    <property type="term" value="F:structural constituent of ribosome"/>
    <property type="evidence" value="ECO:0007669"/>
    <property type="project" value="InterPro"/>
</dbReference>
<dbReference type="GO" id="GO:0006412">
    <property type="term" value="P:translation"/>
    <property type="evidence" value="ECO:0007669"/>
    <property type="project" value="UniProtKB-UniRule"/>
</dbReference>
<dbReference type="CDD" id="cd06089">
    <property type="entry name" value="KOW_RPL26"/>
    <property type="match status" value="1"/>
</dbReference>
<dbReference type="Gene3D" id="2.30.30.30">
    <property type="match status" value="1"/>
</dbReference>
<dbReference type="HAMAP" id="MF_01326_B">
    <property type="entry name" value="Ribosomal_uL24_B"/>
    <property type="match status" value="1"/>
</dbReference>
<dbReference type="InterPro" id="IPR005824">
    <property type="entry name" value="KOW"/>
</dbReference>
<dbReference type="InterPro" id="IPR014722">
    <property type="entry name" value="Rib_uL2_dom2"/>
</dbReference>
<dbReference type="InterPro" id="IPR003256">
    <property type="entry name" value="Ribosomal_uL24"/>
</dbReference>
<dbReference type="InterPro" id="IPR005825">
    <property type="entry name" value="Ribosomal_uL24_CS"/>
</dbReference>
<dbReference type="InterPro" id="IPR041988">
    <property type="entry name" value="Ribosomal_uL24_KOW"/>
</dbReference>
<dbReference type="InterPro" id="IPR008991">
    <property type="entry name" value="Translation_prot_SH3-like_sf"/>
</dbReference>
<dbReference type="NCBIfam" id="TIGR01079">
    <property type="entry name" value="rplX_bact"/>
    <property type="match status" value="1"/>
</dbReference>
<dbReference type="PANTHER" id="PTHR12903">
    <property type="entry name" value="MITOCHONDRIAL RIBOSOMAL PROTEIN L24"/>
    <property type="match status" value="1"/>
</dbReference>
<dbReference type="Pfam" id="PF00467">
    <property type="entry name" value="KOW"/>
    <property type="match status" value="1"/>
</dbReference>
<dbReference type="Pfam" id="PF17136">
    <property type="entry name" value="ribosomal_L24"/>
    <property type="match status" value="1"/>
</dbReference>
<dbReference type="SMART" id="SM00739">
    <property type="entry name" value="KOW"/>
    <property type="match status" value="1"/>
</dbReference>
<dbReference type="SUPFAM" id="SSF50104">
    <property type="entry name" value="Translation proteins SH3-like domain"/>
    <property type="match status" value="1"/>
</dbReference>
<dbReference type="PROSITE" id="PS01108">
    <property type="entry name" value="RIBOSOMAL_L24"/>
    <property type="match status" value="1"/>
</dbReference>